<keyword id="KW-0067">ATP-binding</keyword>
<keyword id="KW-0997">Cell inner membrane</keyword>
<keyword id="KW-1003">Cell membrane</keyword>
<keyword id="KW-0472">Membrane</keyword>
<keyword id="KW-0547">Nucleotide-binding</keyword>
<keyword id="KW-1185">Reference proteome</keyword>
<keyword id="KW-1278">Translocase</keyword>
<keyword id="KW-0813">Transport</keyword>
<evidence type="ECO:0000255" key="1">
    <source>
        <dbReference type="HAMAP-Rule" id="MF_01708"/>
    </source>
</evidence>
<evidence type="ECO:0000305" key="2"/>
<comment type="function">
    <text evidence="1">Part of the ABC transporter complex LolCDE involved in the translocation of mature outer membrane-directed lipoproteins, from the inner membrane to the periplasmic chaperone, LolA. Responsible for the formation of the LolA-lipoprotein complex in an ATP-dependent manner.</text>
</comment>
<comment type="subunit">
    <text evidence="1">The complex is composed of two ATP-binding proteins (LolD) and two transmembrane proteins (LolC and LolE).</text>
</comment>
<comment type="subcellular location">
    <subcellularLocation>
        <location evidence="1">Cell inner membrane</location>
        <topology evidence="1">Peripheral membrane protein</topology>
    </subcellularLocation>
</comment>
<comment type="similarity">
    <text evidence="1">Belongs to the ABC transporter superfamily. Lipoprotein translocase (TC 3.A.1.125) family.</text>
</comment>
<comment type="sequence caution" evidence="2">
    <conflict type="erroneous initiation">
        <sequence resource="EMBL-CDS" id="AAO28237"/>
    </conflict>
</comment>
<protein>
    <recommendedName>
        <fullName evidence="1">Lipoprotein-releasing system ATP-binding protein LolD</fullName>
        <ecNumber evidence="1">7.6.2.-</ecNumber>
    </recommendedName>
</protein>
<sequence>MNERSTPQALTGPVIRAESLGKTYSEGKLLTQVFDGLDLQVMRGETVAIVGASGAGKSTLLHLLGGLDVPTAGEVYVAGQRMSALSDGDRGRLRNKTLGFIYQFHHLLPEFTALENVMMPVLLSGQSVCSAKMRAQMLLEAVELGHRLNHKPSELSGGERQRAAVARALANSPDCVLGDEPTGNLDNRTASTVFELMLELNRAQRTSLVLVTHDRGLARCLDRVLELYQGGLRELTSAEV</sequence>
<organism>
    <name type="scientific">Xylella fastidiosa (strain Temecula1 / ATCC 700964)</name>
    <dbReference type="NCBI Taxonomy" id="183190"/>
    <lineage>
        <taxon>Bacteria</taxon>
        <taxon>Pseudomonadati</taxon>
        <taxon>Pseudomonadota</taxon>
        <taxon>Gammaproteobacteria</taxon>
        <taxon>Lysobacterales</taxon>
        <taxon>Lysobacteraceae</taxon>
        <taxon>Xylella</taxon>
    </lineage>
</organism>
<feature type="chain" id="PRO_0000092471" description="Lipoprotein-releasing system ATP-binding protein LolD">
    <location>
        <begin position="1"/>
        <end position="240"/>
    </location>
</feature>
<feature type="domain" description="ABC transporter" evidence="1">
    <location>
        <begin position="15"/>
        <end position="240"/>
    </location>
</feature>
<feature type="binding site" evidence="1">
    <location>
        <begin position="51"/>
        <end position="58"/>
    </location>
    <ligand>
        <name>ATP</name>
        <dbReference type="ChEBI" id="CHEBI:30616"/>
    </ligand>
</feature>
<gene>
    <name evidence="1" type="primary">lolD</name>
    <name type="ordered locus">PD_0357</name>
</gene>
<dbReference type="EC" id="7.6.2.-" evidence="1"/>
<dbReference type="EMBL" id="AE009442">
    <property type="protein sequence ID" value="AAO28237.1"/>
    <property type="status" value="ALT_INIT"/>
    <property type="molecule type" value="Genomic_DNA"/>
</dbReference>
<dbReference type="RefSeq" id="WP_004089270.1">
    <property type="nucleotide sequence ID" value="NC_004556.1"/>
</dbReference>
<dbReference type="SMR" id="Q87EF4"/>
<dbReference type="GeneID" id="93904058"/>
<dbReference type="KEGG" id="xft:PD_0357"/>
<dbReference type="HOGENOM" id="CLU_000604_1_22_6"/>
<dbReference type="Proteomes" id="UP000002516">
    <property type="component" value="Chromosome"/>
</dbReference>
<dbReference type="GO" id="GO:0005886">
    <property type="term" value="C:plasma membrane"/>
    <property type="evidence" value="ECO:0007669"/>
    <property type="project" value="UniProtKB-SubCell"/>
</dbReference>
<dbReference type="GO" id="GO:0005524">
    <property type="term" value="F:ATP binding"/>
    <property type="evidence" value="ECO:0007669"/>
    <property type="project" value="UniProtKB-KW"/>
</dbReference>
<dbReference type="GO" id="GO:0016887">
    <property type="term" value="F:ATP hydrolysis activity"/>
    <property type="evidence" value="ECO:0007669"/>
    <property type="project" value="InterPro"/>
</dbReference>
<dbReference type="GO" id="GO:0022857">
    <property type="term" value="F:transmembrane transporter activity"/>
    <property type="evidence" value="ECO:0007669"/>
    <property type="project" value="TreeGrafter"/>
</dbReference>
<dbReference type="GO" id="GO:0044874">
    <property type="term" value="P:lipoprotein localization to outer membrane"/>
    <property type="evidence" value="ECO:0007669"/>
    <property type="project" value="TreeGrafter"/>
</dbReference>
<dbReference type="GO" id="GO:0089705">
    <property type="term" value="P:protein localization to outer membrane"/>
    <property type="evidence" value="ECO:0007669"/>
    <property type="project" value="TreeGrafter"/>
</dbReference>
<dbReference type="CDD" id="cd03255">
    <property type="entry name" value="ABC_MJ0796_LolCDE_FtsE"/>
    <property type="match status" value="1"/>
</dbReference>
<dbReference type="FunFam" id="3.40.50.300:FF:000230">
    <property type="entry name" value="Lipoprotein-releasing system ATP-binding protein LolD"/>
    <property type="match status" value="1"/>
</dbReference>
<dbReference type="Gene3D" id="3.40.50.300">
    <property type="entry name" value="P-loop containing nucleotide triphosphate hydrolases"/>
    <property type="match status" value="1"/>
</dbReference>
<dbReference type="InterPro" id="IPR003593">
    <property type="entry name" value="AAA+_ATPase"/>
</dbReference>
<dbReference type="InterPro" id="IPR003439">
    <property type="entry name" value="ABC_transporter-like_ATP-bd"/>
</dbReference>
<dbReference type="InterPro" id="IPR017871">
    <property type="entry name" value="ABC_transporter-like_CS"/>
</dbReference>
<dbReference type="InterPro" id="IPR015854">
    <property type="entry name" value="ABC_transpr_LolD-like"/>
</dbReference>
<dbReference type="InterPro" id="IPR011924">
    <property type="entry name" value="LolD_lipo_ATP-bd"/>
</dbReference>
<dbReference type="InterPro" id="IPR017911">
    <property type="entry name" value="MacB-like_ATP-bd"/>
</dbReference>
<dbReference type="InterPro" id="IPR027417">
    <property type="entry name" value="P-loop_NTPase"/>
</dbReference>
<dbReference type="NCBIfam" id="TIGR02211">
    <property type="entry name" value="LolD_lipo_ex"/>
    <property type="match status" value="1"/>
</dbReference>
<dbReference type="PANTHER" id="PTHR24220">
    <property type="entry name" value="IMPORT ATP-BINDING PROTEIN"/>
    <property type="match status" value="1"/>
</dbReference>
<dbReference type="PANTHER" id="PTHR24220:SF689">
    <property type="entry name" value="LIPOPROTEIN-RELEASING SYSTEM ATP-BINDING PROTEIN LOLD"/>
    <property type="match status" value="1"/>
</dbReference>
<dbReference type="Pfam" id="PF00005">
    <property type="entry name" value="ABC_tran"/>
    <property type="match status" value="1"/>
</dbReference>
<dbReference type="SMART" id="SM00382">
    <property type="entry name" value="AAA"/>
    <property type="match status" value="1"/>
</dbReference>
<dbReference type="SUPFAM" id="SSF52540">
    <property type="entry name" value="P-loop containing nucleoside triphosphate hydrolases"/>
    <property type="match status" value="1"/>
</dbReference>
<dbReference type="PROSITE" id="PS00211">
    <property type="entry name" value="ABC_TRANSPORTER_1"/>
    <property type="match status" value="1"/>
</dbReference>
<dbReference type="PROSITE" id="PS50893">
    <property type="entry name" value="ABC_TRANSPORTER_2"/>
    <property type="match status" value="1"/>
</dbReference>
<dbReference type="PROSITE" id="PS51244">
    <property type="entry name" value="LOLD"/>
    <property type="match status" value="1"/>
</dbReference>
<accession>Q87EF4</accession>
<name>LOLD_XYLFT</name>
<proteinExistence type="inferred from homology"/>
<reference key="1">
    <citation type="journal article" date="2003" name="J. Bacteriol.">
        <title>Comparative analyses of the complete genome sequences of Pierce's disease and citrus variegated chlorosis strains of Xylella fastidiosa.</title>
        <authorList>
            <person name="Van Sluys M.A."/>
            <person name="de Oliveira M.C."/>
            <person name="Monteiro-Vitorello C.B."/>
            <person name="Miyaki C.Y."/>
            <person name="Furlan L.R."/>
            <person name="Camargo L.E.A."/>
            <person name="da Silva A.C.R."/>
            <person name="Moon D.H."/>
            <person name="Takita M.A."/>
            <person name="Lemos E.G.M."/>
            <person name="Machado M.A."/>
            <person name="Ferro M.I.T."/>
            <person name="da Silva F.R."/>
            <person name="Goldman M.H.S."/>
            <person name="Goldman G.H."/>
            <person name="Lemos M.V.F."/>
            <person name="El-Dorry H."/>
            <person name="Tsai S.M."/>
            <person name="Carrer H."/>
            <person name="Carraro D.M."/>
            <person name="de Oliveira R.C."/>
            <person name="Nunes L.R."/>
            <person name="Siqueira W.J."/>
            <person name="Coutinho L.L."/>
            <person name="Kimura E.T."/>
            <person name="Ferro E.S."/>
            <person name="Harakava R."/>
            <person name="Kuramae E.E."/>
            <person name="Marino C.L."/>
            <person name="Giglioti E."/>
            <person name="Abreu I.L."/>
            <person name="Alves L.M.C."/>
            <person name="do Amaral A.M."/>
            <person name="Baia G.S."/>
            <person name="Blanco S.R."/>
            <person name="Brito M.S."/>
            <person name="Cannavan F.S."/>
            <person name="Celestino A.V."/>
            <person name="da Cunha A.F."/>
            <person name="Fenille R.C."/>
            <person name="Ferro J.A."/>
            <person name="Formighieri E.F."/>
            <person name="Kishi L.T."/>
            <person name="Leoni S.G."/>
            <person name="Oliveira A.R."/>
            <person name="Rosa V.E. Jr."/>
            <person name="Sassaki F.T."/>
            <person name="Sena J.A.D."/>
            <person name="de Souza A.A."/>
            <person name="Truffi D."/>
            <person name="Tsukumo F."/>
            <person name="Yanai G.M."/>
            <person name="Zaros L.G."/>
            <person name="Civerolo E.L."/>
            <person name="Simpson A.J.G."/>
            <person name="Almeida N.F. Jr."/>
            <person name="Setubal J.C."/>
            <person name="Kitajima J.P."/>
        </authorList>
    </citation>
    <scope>NUCLEOTIDE SEQUENCE [LARGE SCALE GENOMIC DNA]</scope>
    <source>
        <strain>Temecula1 / ATCC 700964</strain>
    </source>
</reference>